<comment type="function">
    <text evidence="2 4 5 6 7 8 9 10 11 12">Nonribosomal peptide synthase which is required for the regulation of histamine and dopamine levels in various tissues through their condensation with beta-alanine (PubMed:12900414, PubMed:19715698, PubMed:25229196, PubMed:30705105). In epithelial glial cells, plays an essential role in the inactivation of histamine, the main neurotransmitter in the optical nerve system, by catalyzing the conversion of histamine into carcinine (PubMed:12486147, PubMed:12900414, PubMed:25229196, PubMed:30705105, PubMed:5782111). In the cuticle, catalyzes the condensation of beta-alanine with dopamine to form beta-alanyl-dopamine (NBAD), a metabolite involved in the pigmentation and sclerotization of the insect cuticle (PubMed:11934851, PubMed:8580497). Also, regulates the cuticular hydrocarbon composition in females (PubMed:31118901). Acts downstream of the body clock to regulate circadian behavioral rhythms (PubMed:17678856). Can also condense beta-alanine with biogenic amines tyramine, octopamine, and serotonin in vitro (PubMed:12900414, PubMed:19715698).</text>
</comment>
<comment type="catalytic activity">
    <reaction evidence="5 8">
        <text>histamine + beta-alanine + ATP = carcinine + AMP + diphosphate + H(+)</text>
        <dbReference type="Rhea" id="RHEA:73351"/>
        <dbReference type="ChEBI" id="CHEBI:15378"/>
        <dbReference type="ChEBI" id="CHEBI:30616"/>
        <dbReference type="ChEBI" id="CHEBI:33019"/>
        <dbReference type="ChEBI" id="CHEBI:57966"/>
        <dbReference type="ChEBI" id="CHEBI:58432"/>
        <dbReference type="ChEBI" id="CHEBI:192797"/>
        <dbReference type="ChEBI" id="CHEBI:456215"/>
    </reaction>
</comment>
<comment type="catalytic activity">
    <reaction evidence="5 8">
        <text>beta-alanine + ATP + H(+) = beta-alanyl-5'-AMP + diphosphate</text>
        <dbReference type="Rhea" id="RHEA:73339"/>
        <dbReference type="ChEBI" id="CHEBI:15378"/>
        <dbReference type="ChEBI" id="CHEBI:30616"/>
        <dbReference type="ChEBI" id="CHEBI:33019"/>
        <dbReference type="ChEBI" id="CHEBI:57966"/>
        <dbReference type="ChEBI" id="CHEBI:192795"/>
    </reaction>
</comment>
<comment type="catalytic activity">
    <reaction evidence="5 8">
        <text>beta-alanyl-5'-AMP + holo-[peptidyl-carrier protein] = beta-alanyl-[peptidyl-carrier protein] + AMP + H(+)</text>
        <dbReference type="Rhea" id="RHEA:73343"/>
        <dbReference type="Rhea" id="RHEA-COMP:11480"/>
        <dbReference type="Rhea" id="RHEA-COMP:18218"/>
        <dbReference type="ChEBI" id="CHEBI:15378"/>
        <dbReference type="ChEBI" id="CHEBI:64479"/>
        <dbReference type="ChEBI" id="CHEBI:192795"/>
        <dbReference type="ChEBI" id="CHEBI:192796"/>
        <dbReference type="ChEBI" id="CHEBI:456215"/>
    </reaction>
</comment>
<comment type="catalytic activity">
    <reaction evidence="5 8">
        <text>beta-alanyl-[peptidyl-carrier protein] + histamine = carcinine + holo-[peptidyl-carrier protein] + H(+)</text>
        <dbReference type="Rhea" id="RHEA:73355"/>
        <dbReference type="Rhea" id="RHEA-COMP:11480"/>
        <dbReference type="Rhea" id="RHEA-COMP:18218"/>
        <dbReference type="ChEBI" id="CHEBI:15378"/>
        <dbReference type="ChEBI" id="CHEBI:58432"/>
        <dbReference type="ChEBI" id="CHEBI:64479"/>
        <dbReference type="ChEBI" id="CHEBI:192796"/>
        <dbReference type="ChEBI" id="CHEBI:192797"/>
    </reaction>
</comment>
<comment type="catalytic activity">
    <reaction evidence="7 9">
        <text>dopamine + beta-alanine + ATP = beta-alanyl-dopamine + AMP + diphosphate + H(+)</text>
        <dbReference type="Rhea" id="RHEA:73359"/>
        <dbReference type="ChEBI" id="CHEBI:15378"/>
        <dbReference type="ChEBI" id="CHEBI:30616"/>
        <dbReference type="ChEBI" id="CHEBI:33019"/>
        <dbReference type="ChEBI" id="CHEBI:57966"/>
        <dbReference type="ChEBI" id="CHEBI:59905"/>
        <dbReference type="ChEBI" id="CHEBI:192799"/>
        <dbReference type="ChEBI" id="CHEBI:456215"/>
    </reaction>
</comment>
<comment type="catalytic activity">
    <reaction evidence="9">
        <text>beta-alanyl-[peptidyl-carrier protein] + dopamine = beta-alanyl-dopamine + holo-[peptidyl-carrier protein] + H(+)</text>
        <dbReference type="Rhea" id="RHEA:73363"/>
        <dbReference type="Rhea" id="RHEA-COMP:11480"/>
        <dbReference type="Rhea" id="RHEA-COMP:18218"/>
        <dbReference type="ChEBI" id="CHEBI:15378"/>
        <dbReference type="ChEBI" id="CHEBI:59905"/>
        <dbReference type="ChEBI" id="CHEBI:64479"/>
        <dbReference type="ChEBI" id="CHEBI:192796"/>
        <dbReference type="ChEBI" id="CHEBI:192799"/>
    </reaction>
</comment>
<comment type="cofactor">
    <cofactor evidence="1 8">
        <name>pantetheine 4'-phosphate</name>
        <dbReference type="ChEBI" id="CHEBI:47942"/>
    </cofactor>
</comment>
<comment type="cofactor">
    <cofactor evidence="7">
        <name>Mg(2+)</name>
        <dbReference type="ChEBI" id="CHEBI:18420"/>
    </cofactor>
    <text evidence="7">May also use Mn(2+).</text>
</comment>
<comment type="biophysicochemical properties">
    <kinetics>
        <KM evidence="7">170 uM for beta-alanine</KM>
        <KM evidence="7">40 uM for dopamine</KM>
        <KM evidence="8">15 uM for histamine (at pH 7 and 25 degrees Celsius)</KM>
        <Vmax evidence="7">2500.0 pmol/min/mg enzyme toward beta-alanine</Vmax>
        <Vmax evidence="7">1700.0 pmol/min/mg enzyme toward dopamine</Vmax>
        <text evidence="8">kcat is 2.4 sec(-1) with histamine as substrate (at pH 7 and 25 degrees Celsius).</text>
    </kinetics>
    <phDependence>
        <text evidence="7">Optimum pH is 8.4.</text>
    </phDependence>
</comment>
<comment type="subcellular location">
    <subcellularLocation>
        <location evidence="2 3 7">Cytoplasm</location>
    </subcellularLocation>
    <text evidence="3">In glial cells, localizes to thin sheets of cytoplasm enwrapping the cartridge elements of photoreceptor R1-R6 terminals, extending between their profiles, but not into their capitate projections.</text>
</comment>
<comment type="tissue specificity">
    <text evidence="3 6 7 13">Expressed in the optic neuropils in the lamina and in distinct cells at the distal border of the medulla cortex (at protein level) (PubMed:12205712, PubMed:17678856, PubMed:19715698, PubMed:9852943). Expressed in the protocerebrum and thoracic ganglia (at protein level) (PubMed:17678856). Expressed in antennal lobes, antennal nerves and subesophagic ganglion (at protein level) (PubMed:19715698). Specifically, expressed in epithelial glial cells of the medulla that surround the synaptic cleft of photoreceptor axonal endings (at protein level) (PubMed:12205712, PubMed:17678856, PubMed:19715698). Expressed in some cells in the cuticle (PubMed:9852943).</text>
</comment>
<comment type="developmental stage">
    <text evidence="2 3 6 7 8 13">Expression begins in embryos at stage 13 in two cells of each of the abdominal segments 1 to 7 (at protein level) (PubMed:12205712). Expressed at the third larval instars in the glia (at protein level) (PubMed:12205712, PubMed:17678856). Transiently expressed in the integument of late embryos at stage 14-15 (at protein level) (PubMed:19715698). Expressed in embryonic trachea from stage 11 until stage 15 (at protein level) (PubMed:19715698). In the second and third larval instars, expressed at the periphery and in cells within the brain hemispheres arranged in a crescent-shaped structure (at protein level) (PubMed:12205712, PubMed:25229196, PubMed:9852943). In the ventral ganglion, expressed in cells arranged in two rows: one on each side of the ventral nerve cord (at protein level) (PubMed:12205712, PubMed:9852943). Also expressed in the anterior and posterior spiracles (at protein level) (PubMed:12205712). During pupal stages, no expression between 24 and 60 hours after puparium formation (at protein level) (PubMed:11934851, PubMed:12205712). Expression resumes 60 hours after puparium formation in the lamina neuropil, in single cells at the distal border of the medulla and in some cells of the deeper lobula and lobula plate neuropils (at protein level) (PubMed:12205712). In pharate adults, just before eclosion, expressed in epidermal cells; expression levels are similar in all cells that secrete the abdominal tergites (at protein level) (PubMed:11934851). In pharate adults, expressed in the esophagus epidermis and in the ommatidia lens cuticle (at protein level) (PubMed:19715698).</text>
</comment>
<comment type="induction">
    <text evidence="6">In the brain, expressed with a circadian rhythm with high levels at the beginning of day and low levels at night (at protein level).</text>
</comment>
<comment type="domain">
    <text evidence="5 8 9">The nonribosomal peptide synthase is composed of three domains. The adenylation (A) domain is responsible for the adenylation and activation of beta-alanine using ATP (PubMed:12900414, PubMed:25229196). The thiolation (T) or peptidyl carrier protein domain (PCP) contains the prosthetic group 4'-phosphopantetheine, which activated beta-alanyl-AMP is transferred to via thiolation (PubMed:12900414, PubMed:25229196). The condensation (C) domain both performs the selection of the amine substrate, dopamine or histamine, and the condensation of these amines with beta-alanine via an amide bond (PubMed:12900414, PubMed:25229196, PubMed:30705105).</text>
</comment>
<comment type="polymorphism">
    <text evidence="10">e/ebony expression levels vary across D.melanogaster population in the wild, affecting both pigmentation and chain hydrocarbon length profiles.</text>
</comment>
<comment type="disruption phenotype">
    <text evidence="2 4 10 11 12">Reduced histamine levels in the head; specifically, in the central brain, beneath the basement membrane and in proximity to the lamina neuropil (PubMed:12486147). Fewer synaptic vesicles in the terminals of R1-R6 photoreceptors (PubMed:12486147). Loss of carcinine production in the head (PubMed:12486147). Photoreceptor response to light is abnormal (PubMed:5782111). Electroretinogram (ERG) recordings lack 'on' and 'off' transients probably due to an impaired synaptic transmission to postsynaptic cells (PubMed:5782111). Induces a darker pigmentation of the body (PubMed:11934851, PubMed:31118901). The pigment stripe near the posterior edge of each abdominal tergite is darker compared to wild type (PubMed:11934851). Ectopic pigmentation in the thorax and in the wings (PubMed:11934851). In newly emerged female imagoes and fly frass, beta-alanyl-dopamine (NBAD) levels are reduced and dopamine levels are elevated about 2-fold (PubMed:8580497). Females have lower levels of short chain hydrocarbons (CHC) (less than 25C) and higher levels of long chain CHCs (more than 25C) (PubMed:31118901). RNAi-mediated knockdown in oenocytes has no effect on the length of CHC (PubMed:31118901).</text>
</comment>
<comment type="similarity">
    <text evidence="16">Belongs to the NRP synthetase family.</text>
</comment>
<comment type="sequence caution" evidence="16">
    <conflict type="erroneous initiation">
        <sequence resource="EMBL-CDS" id="AAM11081"/>
    </conflict>
    <text>Truncated N-terminus.</text>
</comment>
<evidence type="ECO:0000255" key="1">
    <source>
        <dbReference type="PROSITE-ProRule" id="PRU00258"/>
    </source>
</evidence>
<evidence type="ECO:0000269" key="2">
    <source>
    </source>
</evidence>
<evidence type="ECO:0000269" key="3">
    <source>
    </source>
</evidence>
<evidence type="ECO:0000269" key="4">
    <source>
    </source>
</evidence>
<evidence type="ECO:0000269" key="5">
    <source>
    </source>
</evidence>
<evidence type="ECO:0000269" key="6">
    <source>
    </source>
</evidence>
<evidence type="ECO:0000269" key="7">
    <source>
    </source>
</evidence>
<evidence type="ECO:0000269" key="8">
    <source>
    </source>
</evidence>
<evidence type="ECO:0000269" key="9">
    <source>
    </source>
</evidence>
<evidence type="ECO:0000269" key="10">
    <source>
    </source>
</evidence>
<evidence type="ECO:0000269" key="11">
    <source>
    </source>
</evidence>
<evidence type="ECO:0000269" key="12">
    <source>
    </source>
</evidence>
<evidence type="ECO:0000269" key="13">
    <source>
    </source>
</evidence>
<evidence type="ECO:0000303" key="14">
    <source>
    </source>
</evidence>
<evidence type="ECO:0000303" key="15">
    <source>
    </source>
</evidence>
<evidence type="ECO:0000305" key="16"/>
<evidence type="ECO:0000305" key="17">
    <source>
    </source>
</evidence>
<evidence type="ECO:0000312" key="18">
    <source>
        <dbReference type="EMBL" id="AAM11081.1"/>
    </source>
</evidence>
<evidence type="ECO:0000312" key="19">
    <source>
        <dbReference type="EMBL" id="AAV36932.1"/>
    </source>
</evidence>
<evidence type="ECO:0000312" key="20">
    <source>
        <dbReference type="FlyBase" id="FBgn0000527"/>
    </source>
</evidence>
<evidence type="ECO:0000312" key="21">
    <source>
        <dbReference type="Proteomes" id="UP000000803"/>
    </source>
</evidence>
<evidence type="ECO:0007744" key="22">
    <source>
        <dbReference type="PDB" id="6DYM"/>
    </source>
</evidence>
<evidence type="ECO:0007744" key="23">
    <source>
        <dbReference type="PDB" id="6DYN"/>
    </source>
</evidence>
<evidence type="ECO:0007744" key="24">
    <source>
        <dbReference type="PDB" id="6DYO"/>
    </source>
</evidence>
<evidence type="ECO:0007744" key="25">
    <source>
        <dbReference type="PDB" id="6DYR"/>
    </source>
</evidence>
<evidence type="ECO:0007744" key="26">
    <source>
        <dbReference type="PDB" id="6DYS"/>
    </source>
</evidence>
<evidence type="ECO:0007829" key="27">
    <source>
        <dbReference type="PDB" id="6DYM"/>
    </source>
</evidence>
<sequence>MGSLPQLSIVKGLQQDFVPRALHRIFEEQQLRHADKVALIYQPSTTGQGMAPSQSSYRQMNERANRAARLLVAETHGRFLQPNSDGDFIVAVCMQPSEGLVTTLLAIWKAGGAYLPIDPSFPANRIHHILLEAKPTLVIRDDDIDAGRFQGTPTLSTTELYAKSLQLAGSNLLSEEMLRGGNDHIAIVLYTSGSTGVPKGVRLPHESILNRLQWQWATFPYTANEAVSVFKTALTFVDSIAELWGPLMCGLAILVVPKAVTKDPQRLVALLERYKIRRLVLVPTLLRSLLMYLKMEGGGAAQKLLYNLQIWVCSGEPLSVSLASSFFDYFDEGVHRLYNFYGSTEVLGDVTYFACESKKQLSLYDNVPIGIPLSNTVVYLLDADYRPVKNGEIGEIFASGLNLAAGYVNGRDPERFLENPLAVEKKYARLYRTGDYGSLKNGSIMYEGRTDSQVKIRGHRVDLSEVEKNVAELPLVDKAIVLCYHAGQVDQAILAFVKLRDDAPMVTEMQMEARLKDKLADYMTPQVVILEHVPLLVNGKVDRQALLKTYETANNNEGDSSIVLDFDYSQVPEDLKLTARDLFETVGGVIGRSTRATLAPHSNFYELGGNSLNSIFTVTLLREKGYNIGISEFIAAKNLGEIIEKMAANHDAVQLEEESLNACPHLKMEAVPLRLEHRQEVIDIIVASFYNKADLEQWLKPGVLRTDYSDILNDIWNVLVERDLSFVVYDTNTDRIIGTALNFDARNEPEVDIKSKLLIVFEFLEFCEGPIRDNYLPKGLNQILHSFMMGTAEKLNPRENIACMHFMEHEVLRVAREKQFAGIFTTNTSPLTQQLADVYHYKTLLNFQVNEYVHSDGSRPFGDAPDEQRAIVHWKEVGK</sequence>
<name>EBO_DROME</name>
<protein>
    <recommendedName>
        <fullName evidence="16">Beta-alanyl-bioamine nonribosomal peptide synthetase ebony</fullName>
        <ecNumber evidence="5 7 8 9">6.3.2.-</ecNumber>
    </recommendedName>
    <alternativeName>
        <fullName evidence="14">N-beta-alanyldopamine synthase</fullName>
        <shortName evidence="14">NBAD-synthase</shortName>
    </alternativeName>
    <alternativeName>
        <fullName evidence="15">Protein ebony</fullName>
    </alternativeName>
</protein>
<keyword id="KW-0002">3D-structure</keyword>
<keyword id="KW-0128">Catecholamine metabolism</keyword>
<keyword id="KW-0963">Cytoplasm</keyword>
<keyword id="KW-0436">Ligase</keyword>
<keyword id="KW-0596">Phosphopantetheine</keyword>
<keyword id="KW-0597">Phosphoprotein</keyword>
<keyword id="KW-1185">Reference proteome</keyword>
<gene>
    <name evidence="15 20" type="primary">e</name>
    <name evidence="20" type="ORF">CG3331</name>
</gene>
<accession>Q9VDC6</accession>
<accession>Q8SXA1</accession>
<reference evidence="21" key="1">
    <citation type="journal article" date="2000" name="Science">
        <title>The genome sequence of Drosophila melanogaster.</title>
        <authorList>
            <person name="Adams M.D."/>
            <person name="Celniker S.E."/>
            <person name="Holt R.A."/>
            <person name="Evans C.A."/>
            <person name="Gocayne J.D."/>
            <person name="Amanatides P.G."/>
            <person name="Scherer S.E."/>
            <person name="Li P.W."/>
            <person name="Hoskins R.A."/>
            <person name="Galle R.F."/>
            <person name="George R.A."/>
            <person name="Lewis S.E."/>
            <person name="Richards S."/>
            <person name="Ashburner M."/>
            <person name="Henderson S.N."/>
            <person name="Sutton G.G."/>
            <person name="Wortman J.R."/>
            <person name="Yandell M.D."/>
            <person name="Zhang Q."/>
            <person name="Chen L.X."/>
            <person name="Brandon R.C."/>
            <person name="Rogers Y.-H.C."/>
            <person name="Blazej R.G."/>
            <person name="Champe M."/>
            <person name="Pfeiffer B.D."/>
            <person name="Wan K.H."/>
            <person name="Doyle C."/>
            <person name="Baxter E.G."/>
            <person name="Helt G."/>
            <person name="Nelson C.R."/>
            <person name="Miklos G.L.G."/>
            <person name="Abril J.F."/>
            <person name="Agbayani A."/>
            <person name="An H.-J."/>
            <person name="Andrews-Pfannkoch C."/>
            <person name="Baldwin D."/>
            <person name="Ballew R.M."/>
            <person name="Basu A."/>
            <person name="Baxendale J."/>
            <person name="Bayraktaroglu L."/>
            <person name="Beasley E.M."/>
            <person name="Beeson K.Y."/>
            <person name="Benos P.V."/>
            <person name="Berman B.P."/>
            <person name="Bhandari D."/>
            <person name="Bolshakov S."/>
            <person name="Borkova D."/>
            <person name="Botchan M.R."/>
            <person name="Bouck J."/>
            <person name="Brokstein P."/>
            <person name="Brottier P."/>
            <person name="Burtis K.C."/>
            <person name="Busam D.A."/>
            <person name="Butler H."/>
            <person name="Cadieu E."/>
            <person name="Center A."/>
            <person name="Chandra I."/>
            <person name="Cherry J.M."/>
            <person name="Cawley S."/>
            <person name="Dahlke C."/>
            <person name="Davenport L.B."/>
            <person name="Davies P."/>
            <person name="de Pablos B."/>
            <person name="Delcher A."/>
            <person name="Deng Z."/>
            <person name="Mays A.D."/>
            <person name="Dew I."/>
            <person name="Dietz S.M."/>
            <person name="Dodson K."/>
            <person name="Doup L.E."/>
            <person name="Downes M."/>
            <person name="Dugan-Rocha S."/>
            <person name="Dunkov B.C."/>
            <person name="Dunn P."/>
            <person name="Durbin K.J."/>
            <person name="Evangelista C.C."/>
            <person name="Ferraz C."/>
            <person name="Ferriera S."/>
            <person name="Fleischmann W."/>
            <person name="Fosler C."/>
            <person name="Gabrielian A.E."/>
            <person name="Garg N.S."/>
            <person name="Gelbart W.M."/>
            <person name="Glasser K."/>
            <person name="Glodek A."/>
            <person name="Gong F."/>
            <person name="Gorrell J.H."/>
            <person name="Gu Z."/>
            <person name="Guan P."/>
            <person name="Harris M."/>
            <person name="Harris N.L."/>
            <person name="Harvey D.A."/>
            <person name="Heiman T.J."/>
            <person name="Hernandez J.R."/>
            <person name="Houck J."/>
            <person name="Hostin D."/>
            <person name="Houston K.A."/>
            <person name="Howland T.J."/>
            <person name="Wei M.-H."/>
            <person name="Ibegwam C."/>
            <person name="Jalali M."/>
            <person name="Kalush F."/>
            <person name="Karpen G.H."/>
            <person name="Ke Z."/>
            <person name="Kennison J.A."/>
            <person name="Ketchum K.A."/>
            <person name="Kimmel B.E."/>
            <person name="Kodira C.D."/>
            <person name="Kraft C.L."/>
            <person name="Kravitz S."/>
            <person name="Kulp D."/>
            <person name="Lai Z."/>
            <person name="Lasko P."/>
            <person name="Lei Y."/>
            <person name="Levitsky A.A."/>
            <person name="Li J.H."/>
            <person name="Li Z."/>
            <person name="Liang Y."/>
            <person name="Lin X."/>
            <person name="Liu X."/>
            <person name="Mattei B."/>
            <person name="McIntosh T.C."/>
            <person name="McLeod M.P."/>
            <person name="McPherson D."/>
            <person name="Merkulov G."/>
            <person name="Milshina N.V."/>
            <person name="Mobarry C."/>
            <person name="Morris J."/>
            <person name="Moshrefi A."/>
            <person name="Mount S.M."/>
            <person name="Moy M."/>
            <person name="Murphy B."/>
            <person name="Murphy L."/>
            <person name="Muzny D.M."/>
            <person name="Nelson D.L."/>
            <person name="Nelson D.R."/>
            <person name="Nelson K.A."/>
            <person name="Nixon K."/>
            <person name="Nusskern D.R."/>
            <person name="Pacleb J.M."/>
            <person name="Palazzolo M."/>
            <person name="Pittman G.S."/>
            <person name="Pan S."/>
            <person name="Pollard J."/>
            <person name="Puri V."/>
            <person name="Reese M.G."/>
            <person name="Reinert K."/>
            <person name="Remington K."/>
            <person name="Saunders R.D.C."/>
            <person name="Scheeler F."/>
            <person name="Shen H."/>
            <person name="Shue B.C."/>
            <person name="Siden-Kiamos I."/>
            <person name="Simpson M."/>
            <person name="Skupski M.P."/>
            <person name="Smith T.J."/>
            <person name="Spier E."/>
            <person name="Spradling A.C."/>
            <person name="Stapleton M."/>
            <person name="Strong R."/>
            <person name="Sun E."/>
            <person name="Svirskas R."/>
            <person name="Tector C."/>
            <person name="Turner R."/>
            <person name="Venter E."/>
            <person name="Wang A.H."/>
            <person name="Wang X."/>
            <person name="Wang Z.-Y."/>
            <person name="Wassarman D.A."/>
            <person name="Weinstock G.M."/>
            <person name="Weissenbach J."/>
            <person name="Williams S.M."/>
            <person name="Woodage T."/>
            <person name="Worley K.C."/>
            <person name="Wu D."/>
            <person name="Yang S."/>
            <person name="Yao Q.A."/>
            <person name="Ye J."/>
            <person name="Yeh R.-F."/>
            <person name="Zaveri J.S."/>
            <person name="Zhan M."/>
            <person name="Zhang G."/>
            <person name="Zhao Q."/>
            <person name="Zheng L."/>
            <person name="Zheng X.H."/>
            <person name="Zhong F.N."/>
            <person name="Zhong W."/>
            <person name="Zhou X."/>
            <person name="Zhu S.C."/>
            <person name="Zhu X."/>
            <person name="Smith H.O."/>
            <person name="Gibbs R.A."/>
            <person name="Myers E.W."/>
            <person name="Rubin G.M."/>
            <person name="Venter J.C."/>
        </authorList>
    </citation>
    <scope>NUCLEOTIDE SEQUENCE [LARGE SCALE GENOMIC DNA]</scope>
    <source>
        <strain evidence="21">Berkeley</strain>
    </source>
</reference>
<reference evidence="21" key="2">
    <citation type="journal article" date="2002" name="Genome Biol.">
        <title>Annotation of the Drosophila melanogaster euchromatic genome: a systematic review.</title>
        <authorList>
            <person name="Misra S."/>
            <person name="Crosby M.A."/>
            <person name="Mungall C.J."/>
            <person name="Matthews B.B."/>
            <person name="Campbell K.S."/>
            <person name="Hradecky P."/>
            <person name="Huang Y."/>
            <person name="Kaminker J.S."/>
            <person name="Millburn G.H."/>
            <person name="Prochnik S.E."/>
            <person name="Smith C.D."/>
            <person name="Tupy J.L."/>
            <person name="Whitfield E.J."/>
            <person name="Bayraktaroglu L."/>
            <person name="Berman B.P."/>
            <person name="Bettencourt B.R."/>
            <person name="Celniker S.E."/>
            <person name="de Grey A.D.N.J."/>
            <person name="Drysdale R.A."/>
            <person name="Harris N.L."/>
            <person name="Richter J."/>
            <person name="Russo S."/>
            <person name="Schroeder A.J."/>
            <person name="Shu S.Q."/>
            <person name="Stapleton M."/>
            <person name="Yamada C."/>
            <person name="Ashburner M."/>
            <person name="Gelbart W.M."/>
            <person name="Rubin G.M."/>
            <person name="Lewis S.E."/>
        </authorList>
    </citation>
    <scope>GENOME REANNOTATION</scope>
    <source>
        <strain evidence="21">Berkeley</strain>
    </source>
</reference>
<reference evidence="19" key="3">
    <citation type="submission" date="2004-10" db="EMBL/GenBank/DDBJ databases">
        <authorList>
            <person name="Stapleton M."/>
            <person name="Carlson J."/>
            <person name="Chavez C."/>
            <person name="Frise E."/>
            <person name="George R."/>
            <person name="Pacleb J."/>
            <person name="Park S."/>
            <person name="Wan K."/>
            <person name="Yu C."/>
            <person name="Rubin G.M."/>
            <person name="Celniker S."/>
        </authorList>
    </citation>
    <scope>NUCLEOTIDE SEQUENCE [LARGE SCALE MRNA]</scope>
    <source>
        <strain evidence="19">Berkeley</strain>
    </source>
</reference>
<reference evidence="18" key="4">
    <citation type="journal article" date="2002" name="Genome Biol.">
        <title>A Drosophila full-length cDNA resource.</title>
        <authorList>
            <person name="Stapleton M."/>
            <person name="Carlson J.W."/>
            <person name="Brokstein P."/>
            <person name="Yu C."/>
            <person name="Champe M."/>
            <person name="George R.A."/>
            <person name="Guarin H."/>
            <person name="Kronmiller B."/>
            <person name="Pacleb J.M."/>
            <person name="Park S."/>
            <person name="Wan K.H."/>
            <person name="Rubin G.M."/>
            <person name="Celniker S.E."/>
        </authorList>
    </citation>
    <scope>NUCLEOTIDE SEQUENCE [LARGE SCALE MRNA] OF 169-879</scope>
    <source>
        <strain evidence="18">Berkeley</strain>
        <tissue evidence="18">Head</tissue>
    </source>
</reference>
<reference evidence="16" key="5">
    <citation type="journal article" date="1969" name="Nature">
        <title>Abnormal electroretinograms in visual mutants of Drosophila.</title>
        <authorList>
            <person name="Hotta Y."/>
            <person name="Benzer S."/>
        </authorList>
    </citation>
    <scope>FUNCTION</scope>
    <scope>DISRUPTION PHENOTYPE</scope>
</reference>
<reference evidence="16" key="6">
    <citation type="journal article" date="1996" name="Arch. Insect Biochem. Physiol.">
        <title>Catecholamine metabolism and in vitro induction of premature cuticle melanization in wild type and pigmentation mutants of Drosophila melanogaster.</title>
        <authorList>
            <person name="Walter M.F."/>
            <person name="Zeineh L.L."/>
            <person name="Black B.C."/>
            <person name="McIvor W.E."/>
            <person name="Wright T.R."/>
            <person name="Biessmann H."/>
        </authorList>
    </citation>
    <scope>FUNCTION</scope>
    <scope>DISRUPTION PHENOTYPE</scope>
</reference>
<reference evidence="16" key="7">
    <citation type="journal article" date="1998" name="Gene">
        <title>The Drosophila ebony gene is closely related to microbial peptide synthetases and shows specific cuticle and nervous system expression.</title>
        <authorList>
            <person name="Hovemann B.T."/>
            <person name="Ryseck R.P."/>
            <person name="Walldorf U."/>
            <person name="Stoertkuhl K.F."/>
            <person name="Dietzel I.D."/>
            <person name="Dessen E."/>
        </authorList>
    </citation>
    <scope>TISSUE SPECIFICITY</scope>
    <scope>DEVELOPMENTAL STAGE</scope>
</reference>
<reference evidence="16" key="8">
    <citation type="journal article" date="2002" name="Development">
        <title>Reciprocal functions of the Drosophila yellow and ebony proteins in the development and evolution of pigment patterns.</title>
        <authorList>
            <person name="Wittkopp P.J."/>
            <person name="True J.R."/>
            <person name="Carroll S.B."/>
        </authorList>
    </citation>
    <scope>FUNCTION</scope>
    <scope>SUBCELLULAR LOCATION</scope>
    <scope>DEVELOPMENTAL STAGE</scope>
    <scope>DISRUPTION PHENOTYPE</scope>
</reference>
<reference evidence="16" key="9">
    <citation type="journal article" date="2002" name="J. Comp. Neurol.">
        <title>Ebony protein in the Drosophila nervous system: optic neuropile expression in glial cells.</title>
        <authorList>
            <person name="Richardt A."/>
            <person name="Rybak J."/>
            <person name="Stoertkuhl K.F."/>
            <person name="Meinertzhagen I.A."/>
            <person name="Hovemann B.T."/>
        </authorList>
    </citation>
    <scope>SUBCELLULAR LOCATION</scope>
    <scope>TISSUE SPECIFICITY</scope>
    <scope>DEVELOPMENTAL STAGE</scope>
</reference>
<reference evidence="16" key="10">
    <citation type="journal article" date="2002" name="J. Neurosci.">
        <title>tan and ebony genes regulate a novel pathway for transmitter metabolism at fly photoreceptor terminals.</title>
        <authorList>
            <person name="Borycz J."/>
            <person name="Borycz J.A."/>
            <person name="Loubani M."/>
            <person name="Meinertzhagen I.A."/>
        </authorList>
    </citation>
    <scope>FUNCTION</scope>
    <scope>DISRUPTION PHENOTYPE</scope>
</reference>
<reference evidence="16" key="11">
    <citation type="journal article" date="2003" name="J. Biol. Chem.">
        <title>Ebony, a novel nonribosomal peptide synthetase for beta-alanine conjugation with biogenic amines in Drosophila.</title>
        <authorList>
            <person name="Richardt A."/>
            <person name="Kemme T."/>
            <person name="Wagner S."/>
            <person name="Schwarzer D."/>
            <person name="Marahiel M.A."/>
            <person name="Hovemann B.T."/>
        </authorList>
    </citation>
    <scope>FUNCTION</scope>
    <scope>CATALYTIC ACTIVITY</scope>
    <scope>COFACTOR</scope>
    <scope>DOMAIN</scope>
    <scope>MUTAGENESIS OF SER-611</scope>
</reference>
<reference evidence="16" key="12">
    <citation type="journal article" date="2007" name="Neuron">
        <title>Drosophila ebony activity is required in glia for the circadian regulation of locomotor activity.</title>
        <authorList>
            <person name="Suh J."/>
            <person name="Jackson F.R."/>
        </authorList>
    </citation>
    <scope>FUNCTION</scope>
    <scope>TISSUE SPECIFICITY</scope>
    <scope>DEVELOPMENTAL STAGE</scope>
    <scope>INDUCTION</scope>
</reference>
<reference evidence="16" key="13">
    <citation type="journal article" date="2010" name="J. Insect Physiol.">
        <title>The enzyme NBAD-synthase plays diverse roles during the life cycle of Drosophila melanogaster.</title>
        <authorList>
            <person name="Perez M.M."/>
            <person name="Schachter J."/>
            <person name="Berni J."/>
            <person name="Quesada-Allue L.A."/>
        </authorList>
    </citation>
    <scope>FUNCTION</scope>
    <scope>CATALYTIC ACTIVITY</scope>
    <scope>COFACTOR</scope>
    <scope>BIOPHYSICOCHEMICAL PROPERTIES</scope>
    <scope>SUBCELLULAR LOCATION</scope>
    <scope>TISSUE SPECIFICITY</scope>
    <scope>DEVELOPMENTAL STAGE</scope>
</reference>
<reference evidence="16" key="14">
    <citation type="journal article" date="2014" name="FEBS J.">
        <title>Drosophila Ebony: a novel type of nonribosomal peptide synthetase related enzyme with unusually fast peptide bond formation kinetics.</title>
        <authorList>
            <person name="Hartwig S."/>
            <person name="Dovengerds C."/>
            <person name="Herrmann C."/>
            <person name="Hovemann B.T."/>
        </authorList>
    </citation>
    <scope>FUNCTION</scope>
    <scope>CATALYTIC ACTIVITY</scope>
    <scope>COFACTOR</scope>
    <scope>BIOPHYSICOCHEMICAL PROPERTIES</scope>
    <scope>DOMAIN</scope>
    <scope>MUTAGENESIS OF SER-611</scope>
</reference>
<reference evidence="16" key="15">
    <citation type="journal article" date="2019" name="Front. Physiol.">
        <title>Pleiotropic Effects of ebony and tan on Pigmentation and Cuticular Hydrocarbon Composition in Drosophila melanogaster.</title>
        <authorList>
            <person name="Massey J.H."/>
            <person name="Akiyama N."/>
            <person name="Bien T."/>
            <person name="Dreisewerd K."/>
            <person name="Wittkopp P.J."/>
            <person name="Yew J.Y."/>
            <person name="Takahashi A."/>
        </authorList>
    </citation>
    <scope>FUNCTION</scope>
    <scope>POLYMORPHISM</scope>
    <scope>DISRUPTION PHENOTYPE</scope>
</reference>
<reference evidence="22 23 24 25 26" key="16">
    <citation type="journal article" date="2019" name="Proc. Natl. Acad. Sci. U.S.A.">
        <title>Drosophila melanogaster nonribosomal peptide synthetase Ebony encodes an atypical condensation domain.</title>
        <authorList>
            <person name="Izore T."/>
            <person name="Tailhades J."/>
            <person name="Hansen M.H."/>
            <person name="Kaczmarski J.A."/>
            <person name="Jackson C.J."/>
            <person name="Cryle M.J."/>
        </authorList>
    </citation>
    <scope>X-RAY CRYSTALLOGRAPHY (2.02 ANGSTROMS) OF 666-879 IN APO FORM AND IN COMPLEX WITH HISTAMINE; DOPAMINE; CARCININE AND BETA-ALANYL-DOPAMINE</scope>
    <scope>FUNCTION</scope>
    <scope>CATALYTIC ACTIVITY</scope>
    <scope>DOMAIN</scope>
</reference>
<organism evidence="21">
    <name type="scientific">Drosophila melanogaster</name>
    <name type="common">Fruit fly</name>
    <dbReference type="NCBI Taxonomy" id="7227"/>
    <lineage>
        <taxon>Eukaryota</taxon>
        <taxon>Metazoa</taxon>
        <taxon>Ecdysozoa</taxon>
        <taxon>Arthropoda</taxon>
        <taxon>Hexapoda</taxon>
        <taxon>Insecta</taxon>
        <taxon>Pterygota</taxon>
        <taxon>Neoptera</taxon>
        <taxon>Endopterygota</taxon>
        <taxon>Diptera</taxon>
        <taxon>Brachycera</taxon>
        <taxon>Muscomorpha</taxon>
        <taxon>Ephydroidea</taxon>
        <taxon>Drosophilidae</taxon>
        <taxon>Drosophila</taxon>
        <taxon>Sophophora</taxon>
    </lineage>
</organism>
<feature type="chain" id="PRO_0000457084" description="Beta-alanyl-bioamine nonribosomal peptide synthetase ebony">
    <location>
        <begin position="1"/>
        <end position="879"/>
    </location>
</feature>
<feature type="domain" description="Carrier" evidence="1">
    <location>
        <begin position="573"/>
        <end position="650"/>
    </location>
</feature>
<feature type="region of interest" description="Adenylation" evidence="17">
    <location>
        <begin position="26"/>
        <end position="540"/>
    </location>
</feature>
<feature type="region of interest" description="Condensation" evidence="17">
    <location>
        <begin position="666"/>
        <end position="679"/>
    </location>
</feature>
<feature type="binding site" evidence="9 24">
    <location>
        <position position="696"/>
    </location>
    <ligand>
        <name>dopamine</name>
        <dbReference type="ChEBI" id="CHEBI:59905"/>
    </ligand>
</feature>
<feature type="binding site" evidence="9 23">
    <location>
        <position position="696"/>
    </location>
    <ligand>
        <name>histamine</name>
        <dbReference type="ChEBI" id="CHEBI:58432"/>
    </ligand>
</feature>
<feature type="binding site" evidence="9 25 26">
    <location>
        <position position="825"/>
    </location>
    <ligand>
        <name>beta-alanine</name>
        <dbReference type="ChEBI" id="CHEBI:57966"/>
    </ligand>
</feature>
<feature type="binding site" evidence="9 25 26">
    <location>
        <position position="827"/>
    </location>
    <ligand>
        <name>beta-alanine</name>
        <dbReference type="ChEBI" id="CHEBI:57966"/>
    </ligand>
</feature>
<feature type="modified residue" description="O-(pantetheine 4'-phosphoryl)serine" evidence="1">
    <location>
        <position position="611"/>
    </location>
</feature>
<feature type="mutagenesis site" description="Impairs attachment of prosthetic group pantetheine 4'-phosphate and thus, the transfer of beta-alanine to the carrier domain. No effect on beta-alanine adenylation. Causes dark body pigmentation." evidence="5 8">
    <original>S</original>
    <variation>A</variation>
    <location>
        <position position="611"/>
    </location>
</feature>
<feature type="strand" evidence="27">
    <location>
        <begin position="668"/>
        <end position="672"/>
    </location>
</feature>
<feature type="helix" evidence="27">
    <location>
        <begin position="675"/>
        <end position="677"/>
    </location>
</feature>
<feature type="helix" evidence="27">
    <location>
        <begin position="678"/>
        <end position="689"/>
    </location>
</feature>
<feature type="turn" evidence="27">
    <location>
        <begin position="690"/>
        <end position="692"/>
    </location>
</feature>
<feature type="helix" evidence="27">
    <location>
        <begin position="696"/>
        <end position="699"/>
    </location>
</feature>
<feature type="helix" evidence="27">
    <location>
        <begin position="705"/>
        <end position="722"/>
    </location>
</feature>
<feature type="strand" evidence="27">
    <location>
        <begin position="726"/>
        <end position="730"/>
    </location>
</feature>
<feature type="turn" evidence="27">
    <location>
        <begin position="731"/>
        <end position="734"/>
    </location>
</feature>
<feature type="strand" evidence="27">
    <location>
        <begin position="735"/>
        <end position="744"/>
    </location>
</feature>
<feature type="helix" evidence="27">
    <location>
        <begin position="757"/>
        <end position="775"/>
    </location>
</feature>
<feature type="strand" evidence="27">
    <location>
        <begin position="782"/>
        <end position="791"/>
    </location>
</feature>
<feature type="helix" evidence="27">
    <location>
        <begin position="797"/>
        <end position="817"/>
    </location>
</feature>
<feature type="strand" evidence="27">
    <location>
        <begin position="821"/>
        <end position="827"/>
    </location>
</feature>
<feature type="helix" evidence="27">
    <location>
        <begin position="830"/>
        <end position="838"/>
    </location>
</feature>
<feature type="strand" evidence="27">
    <location>
        <begin position="842"/>
        <end position="848"/>
    </location>
</feature>
<feature type="helix" evidence="27">
    <location>
        <begin position="849"/>
        <end position="851"/>
    </location>
</feature>
<feature type="turn" evidence="27">
    <location>
        <begin position="860"/>
        <end position="863"/>
    </location>
</feature>
<feature type="strand" evidence="27">
    <location>
        <begin position="869"/>
        <end position="876"/>
    </location>
</feature>
<dbReference type="EC" id="6.3.2.-" evidence="5 7 8 9"/>
<dbReference type="EMBL" id="AE014297">
    <property type="protein sequence ID" value="AAF55870.1"/>
    <property type="molecule type" value="Genomic_DNA"/>
</dbReference>
<dbReference type="EMBL" id="BT016047">
    <property type="protein sequence ID" value="AAV36932.1"/>
    <property type="molecule type" value="mRNA"/>
</dbReference>
<dbReference type="EMBL" id="AY094728">
    <property type="protein sequence ID" value="AAM11081.1"/>
    <property type="status" value="ALT_INIT"/>
    <property type="molecule type" value="mRNA"/>
</dbReference>
<dbReference type="RefSeq" id="NP_524431.2">
    <property type="nucleotide sequence ID" value="NM_079707.4"/>
</dbReference>
<dbReference type="PDB" id="6DYM">
    <property type="method" value="X-ray"/>
    <property type="resolution" value="2.02 A"/>
    <property type="chains" value="A=666-879"/>
</dbReference>
<dbReference type="PDB" id="6DYN">
    <property type="method" value="X-ray"/>
    <property type="resolution" value="2.10 A"/>
    <property type="chains" value="A=666-879"/>
</dbReference>
<dbReference type="PDB" id="6DYO">
    <property type="method" value="X-ray"/>
    <property type="resolution" value="2.84 A"/>
    <property type="chains" value="A=666-879"/>
</dbReference>
<dbReference type="PDB" id="6DYR">
    <property type="method" value="X-ray"/>
    <property type="resolution" value="2.45 A"/>
    <property type="chains" value="A=666-879"/>
</dbReference>
<dbReference type="PDB" id="6DYS">
    <property type="method" value="X-ray"/>
    <property type="resolution" value="2.30 A"/>
    <property type="chains" value="A=666-879"/>
</dbReference>
<dbReference type="PDBsum" id="6DYM"/>
<dbReference type="PDBsum" id="6DYN"/>
<dbReference type="PDBsum" id="6DYO"/>
<dbReference type="PDBsum" id="6DYR"/>
<dbReference type="PDBsum" id="6DYS"/>
<dbReference type="SMR" id="Q9VDC6"/>
<dbReference type="FunCoup" id="Q9VDC6">
    <property type="interactions" value="22"/>
</dbReference>
<dbReference type="IntAct" id="Q9VDC6">
    <property type="interactions" value="4"/>
</dbReference>
<dbReference type="STRING" id="7227.FBpp0083505"/>
<dbReference type="PaxDb" id="7227-FBpp0083505"/>
<dbReference type="DNASU" id="42521"/>
<dbReference type="EnsemblMetazoa" id="FBtr0084106">
    <property type="protein sequence ID" value="FBpp0083505"/>
    <property type="gene ID" value="FBgn0000527"/>
</dbReference>
<dbReference type="GeneID" id="42521"/>
<dbReference type="KEGG" id="dme:Dmel_CG3331"/>
<dbReference type="UCSC" id="CG3331-RA">
    <property type="organism name" value="d. melanogaster"/>
</dbReference>
<dbReference type="AGR" id="FB:FBgn0000527"/>
<dbReference type="CTD" id="42521"/>
<dbReference type="FlyBase" id="FBgn0000527">
    <property type="gene designation" value="e"/>
</dbReference>
<dbReference type="VEuPathDB" id="VectorBase:FBgn0000527"/>
<dbReference type="eggNOG" id="KOG1178">
    <property type="taxonomic scope" value="Eukaryota"/>
</dbReference>
<dbReference type="HOGENOM" id="CLU_000022_2_12_1"/>
<dbReference type="InParanoid" id="Q9VDC6"/>
<dbReference type="OMA" id="FMMGTAE"/>
<dbReference type="OrthoDB" id="416786at2759"/>
<dbReference type="BioGRID-ORCS" id="42521">
    <property type="hits" value="0 hits in 1 CRISPR screen"/>
</dbReference>
<dbReference type="GenomeRNAi" id="42521"/>
<dbReference type="PRO" id="PR:Q9VDC6"/>
<dbReference type="Proteomes" id="UP000000803">
    <property type="component" value="Chromosome 3R"/>
</dbReference>
<dbReference type="Bgee" id="FBgn0000527">
    <property type="expression patterns" value="Expressed in capitellum (Drosophila) and 54 other cell types or tissues"/>
</dbReference>
<dbReference type="ExpressionAtlas" id="Q9VDC6">
    <property type="expression patterns" value="baseline and differential"/>
</dbReference>
<dbReference type="GO" id="GO:0005737">
    <property type="term" value="C:cytoplasm"/>
    <property type="evidence" value="ECO:0000314"/>
    <property type="project" value="FlyBase"/>
</dbReference>
<dbReference type="GO" id="GO:0003833">
    <property type="term" value="F:beta-alanyl amine synthase activity"/>
    <property type="evidence" value="ECO:0000314"/>
    <property type="project" value="FlyBase"/>
</dbReference>
<dbReference type="GO" id="GO:0004467">
    <property type="term" value="F:long-chain fatty acid-CoA ligase activity"/>
    <property type="evidence" value="ECO:0007669"/>
    <property type="project" value="UniProtKB-EC"/>
</dbReference>
<dbReference type="GO" id="GO:0043042">
    <property type="term" value="P:amino acid adenylylation by nonribosomal peptide synthase"/>
    <property type="evidence" value="ECO:0000314"/>
    <property type="project" value="FlyBase"/>
</dbReference>
<dbReference type="GO" id="GO:0007593">
    <property type="term" value="P:chitin-based cuticle sclerotization"/>
    <property type="evidence" value="ECO:0000315"/>
    <property type="project" value="FlyBase"/>
</dbReference>
<dbReference type="GO" id="GO:0007623">
    <property type="term" value="P:circadian rhythm"/>
    <property type="evidence" value="ECO:0000303"/>
    <property type="project" value="FlyBase"/>
</dbReference>
<dbReference type="GO" id="GO:0048067">
    <property type="term" value="P:cuticle pigmentation"/>
    <property type="evidence" value="ECO:0000315"/>
    <property type="project" value="FlyBase"/>
</dbReference>
<dbReference type="GO" id="GO:0048066">
    <property type="term" value="P:developmental pigmentation"/>
    <property type="evidence" value="ECO:0000304"/>
    <property type="project" value="FlyBase"/>
</dbReference>
<dbReference type="GO" id="GO:0042417">
    <property type="term" value="P:dopamine metabolic process"/>
    <property type="evidence" value="ECO:0000314"/>
    <property type="project" value="FlyBase"/>
</dbReference>
<dbReference type="GO" id="GO:0001692">
    <property type="term" value="P:histamine metabolic process"/>
    <property type="evidence" value="ECO:0000315"/>
    <property type="project" value="FlyBase"/>
</dbReference>
<dbReference type="GO" id="GO:0045475">
    <property type="term" value="P:locomotor rhythm"/>
    <property type="evidence" value="ECO:0000303"/>
    <property type="project" value="FlyBase"/>
</dbReference>
<dbReference type="GO" id="GO:0006583">
    <property type="term" value="P:melanin biosynthetic process from tyrosine"/>
    <property type="evidence" value="ECO:0000304"/>
    <property type="project" value="FlyBase"/>
</dbReference>
<dbReference type="GO" id="GO:0048022">
    <property type="term" value="P:negative regulation of melanin biosynthetic process"/>
    <property type="evidence" value="ECO:0000315"/>
    <property type="project" value="FlyBase"/>
</dbReference>
<dbReference type="GO" id="GO:0042440">
    <property type="term" value="P:pigment metabolic process"/>
    <property type="evidence" value="ECO:0000304"/>
    <property type="project" value="FlyBase"/>
</dbReference>
<dbReference type="GO" id="GO:0048082">
    <property type="term" value="P:regulation of adult chitin-containing cuticle pigmentation"/>
    <property type="evidence" value="ECO:0000315"/>
    <property type="project" value="FlyBase"/>
</dbReference>
<dbReference type="CDD" id="cd05930">
    <property type="entry name" value="A_NRPS"/>
    <property type="match status" value="1"/>
</dbReference>
<dbReference type="FunFam" id="1.10.1200.10:FF:000030">
    <property type="entry name" value="Ebony protein"/>
    <property type="match status" value="1"/>
</dbReference>
<dbReference type="FunFam" id="3.40.50.12780:FF:000038">
    <property type="entry name" value="Ebony protein"/>
    <property type="match status" value="1"/>
</dbReference>
<dbReference type="FunFam" id="3.40.630.30:FF:000088">
    <property type="entry name" value="Ebony protein"/>
    <property type="match status" value="1"/>
</dbReference>
<dbReference type="FunFam" id="3.30.300.30:FF:000030">
    <property type="entry name" value="Mutant e4 ebony"/>
    <property type="match status" value="1"/>
</dbReference>
<dbReference type="Gene3D" id="3.30.300.30">
    <property type="match status" value="1"/>
</dbReference>
<dbReference type="Gene3D" id="3.40.630.30">
    <property type="match status" value="1"/>
</dbReference>
<dbReference type="Gene3D" id="1.10.1200.10">
    <property type="entry name" value="ACP-like"/>
    <property type="match status" value="1"/>
</dbReference>
<dbReference type="Gene3D" id="3.40.50.12780">
    <property type="entry name" value="N-terminal domain of ligase-like"/>
    <property type="match status" value="1"/>
</dbReference>
<dbReference type="InterPro" id="IPR036736">
    <property type="entry name" value="ACP-like_sf"/>
</dbReference>
<dbReference type="InterPro" id="IPR045851">
    <property type="entry name" value="AMP-bd_C_sf"/>
</dbReference>
<dbReference type="InterPro" id="IPR020845">
    <property type="entry name" value="AMP-binding_CS"/>
</dbReference>
<dbReference type="InterPro" id="IPR000873">
    <property type="entry name" value="AMP-dep_synth/lig_dom"/>
</dbReference>
<dbReference type="InterPro" id="IPR042099">
    <property type="entry name" value="ANL_N_sf"/>
</dbReference>
<dbReference type="InterPro" id="IPR009081">
    <property type="entry name" value="PP-bd_ACP"/>
</dbReference>
<dbReference type="PANTHER" id="PTHR44845:SF6">
    <property type="entry name" value="BETA-ALANINE-ACTIVATING ENZYME"/>
    <property type="match status" value="1"/>
</dbReference>
<dbReference type="PANTHER" id="PTHR44845">
    <property type="entry name" value="CARRIER DOMAIN-CONTAINING PROTEIN"/>
    <property type="match status" value="1"/>
</dbReference>
<dbReference type="Pfam" id="PF00501">
    <property type="entry name" value="AMP-binding"/>
    <property type="match status" value="1"/>
</dbReference>
<dbReference type="Pfam" id="PF00550">
    <property type="entry name" value="PP-binding"/>
    <property type="match status" value="1"/>
</dbReference>
<dbReference type="SUPFAM" id="SSF56801">
    <property type="entry name" value="Acetyl-CoA synthetase-like"/>
    <property type="match status" value="1"/>
</dbReference>
<dbReference type="SUPFAM" id="SSF47336">
    <property type="entry name" value="ACP-like"/>
    <property type="match status" value="1"/>
</dbReference>
<dbReference type="PROSITE" id="PS00455">
    <property type="entry name" value="AMP_BINDING"/>
    <property type="match status" value="1"/>
</dbReference>
<dbReference type="PROSITE" id="PS50075">
    <property type="entry name" value="CARRIER"/>
    <property type="match status" value="1"/>
</dbReference>
<proteinExistence type="evidence at protein level"/>